<sequence length="562" mass="61766">MDIKRTILIVALAIVTYVGVLKWNQDYGQAAMPTQNVAASNTAPGIPDTAAGNNGSASADVPSATGNTTSAAPLETPAVASKDLIHVKTDVLDLAIDPVGGDVVQLRLPLYPRRQDRPDVPFQLFDNGGERTFLAQSGLTGTNGPDARASGRPVYSSAQKSYQLADGQDSMVVELKFSENGVNYIKRFTFKRGLYDLVMTYVVDNQSAQPWAGNLFAQLKRDASSDPSSTTATGTATYLGAALWTAAEPYKKVSMKDIDKGQIKENVQGGWVAWLQHYFVTAWIPDHNVTNAVQTRKDSQGNYIIGFTSPTLSVAPGAQGETTATLYAGPKSQAVLKELSPGLELTVDYGFLWFIAQPIFWLLQHIHAILGNWGWSIIVLTMLIKGLFFPLSAASYKSMARMRAVAPKLAVLKEQHGDDRQKMSQAMMELYKKEKINPLGGCLPILVQMPVFLSLYWVLLESVEMRQAPWILWITDLSIKDPFFILPIIMGATMFIQQRLNPTPPDPMQAKVMKMMPIIFTFFFLWFPAGLVLYWVVNNTLSIAQQAYITRKIGAATKKAAA</sequence>
<protein>
    <recommendedName>
        <fullName evidence="1">Membrane protein insertase YidC</fullName>
    </recommendedName>
    <alternativeName>
        <fullName evidence="1">Foldase YidC</fullName>
    </alternativeName>
    <alternativeName>
        <fullName evidence="1">Membrane integrase YidC</fullName>
    </alternativeName>
    <alternativeName>
        <fullName evidence="1">Membrane protein YidC</fullName>
    </alternativeName>
</protein>
<name>YIDC_PSESM</name>
<reference key="1">
    <citation type="journal article" date="2003" name="Proc. Natl. Acad. Sci. U.S.A.">
        <title>The complete genome sequence of the Arabidopsis and tomato pathogen Pseudomonas syringae pv. tomato DC3000.</title>
        <authorList>
            <person name="Buell C.R."/>
            <person name="Joardar V."/>
            <person name="Lindeberg M."/>
            <person name="Selengut J."/>
            <person name="Paulsen I.T."/>
            <person name="Gwinn M.L."/>
            <person name="Dodson R.J."/>
            <person name="DeBoy R.T."/>
            <person name="Durkin A.S."/>
            <person name="Kolonay J.F."/>
            <person name="Madupu R."/>
            <person name="Daugherty S.C."/>
            <person name="Brinkac L.M."/>
            <person name="Beanan M.J."/>
            <person name="Haft D.H."/>
            <person name="Nelson W.C."/>
            <person name="Davidsen T.M."/>
            <person name="Zafar N."/>
            <person name="Zhou L."/>
            <person name="Liu J."/>
            <person name="Yuan Q."/>
            <person name="Khouri H.M."/>
            <person name="Fedorova N.B."/>
            <person name="Tran B."/>
            <person name="Russell D."/>
            <person name="Berry K.J."/>
            <person name="Utterback T.R."/>
            <person name="Van Aken S.E."/>
            <person name="Feldblyum T.V."/>
            <person name="D'Ascenzo M."/>
            <person name="Deng W.-L."/>
            <person name="Ramos A.R."/>
            <person name="Alfano J.R."/>
            <person name="Cartinhour S."/>
            <person name="Chatterjee A.K."/>
            <person name="Delaney T.P."/>
            <person name="Lazarowitz S.G."/>
            <person name="Martin G.B."/>
            <person name="Schneider D.J."/>
            <person name="Tang X."/>
            <person name="Bender C.L."/>
            <person name="White O."/>
            <person name="Fraser C.M."/>
            <person name="Collmer A."/>
        </authorList>
    </citation>
    <scope>NUCLEOTIDE SEQUENCE [LARGE SCALE GENOMIC DNA]</scope>
    <source>
        <strain>ATCC BAA-871 / DC3000</strain>
    </source>
</reference>
<comment type="function">
    <text evidence="1">Required for the insertion and/or proper folding and/or complex formation of integral membrane proteins into the membrane. Involved in integration of membrane proteins that insert both dependently and independently of the Sec translocase complex, as well as at least some lipoproteins. Aids folding of multispanning membrane proteins.</text>
</comment>
<comment type="subunit">
    <text evidence="1">Interacts with the Sec translocase complex via SecD. Specifically interacts with transmembrane segments of nascent integral membrane proteins during membrane integration.</text>
</comment>
<comment type="subcellular location">
    <subcellularLocation>
        <location evidence="1">Cell inner membrane</location>
        <topology evidence="1">Multi-pass membrane protein</topology>
    </subcellularLocation>
</comment>
<comment type="similarity">
    <text evidence="1">Belongs to the OXA1/ALB3/YidC family. Type 1 subfamily.</text>
</comment>
<organism>
    <name type="scientific">Pseudomonas syringae pv. tomato (strain ATCC BAA-871 / DC3000)</name>
    <dbReference type="NCBI Taxonomy" id="223283"/>
    <lineage>
        <taxon>Bacteria</taxon>
        <taxon>Pseudomonadati</taxon>
        <taxon>Pseudomonadota</taxon>
        <taxon>Gammaproteobacteria</taxon>
        <taxon>Pseudomonadales</taxon>
        <taxon>Pseudomonadaceae</taxon>
        <taxon>Pseudomonas</taxon>
    </lineage>
</organism>
<evidence type="ECO:0000255" key="1">
    <source>
        <dbReference type="HAMAP-Rule" id="MF_01810"/>
    </source>
</evidence>
<evidence type="ECO:0000256" key="2">
    <source>
        <dbReference type="SAM" id="MobiDB-lite"/>
    </source>
</evidence>
<feature type="chain" id="PRO_0000124744" description="Membrane protein insertase YidC">
    <location>
        <begin position="1"/>
        <end position="562"/>
    </location>
</feature>
<feature type="transmembrane region" description="Helical" evidence="1">
    <location>
        <begin position="1"/>
        <end position="21"/>
    </location>
</feature>
<feature type="transmembrane region" description="Helical" evidence="1">
    <location>
        <begin position="343"/>
        <end position="363"/>
    </location>
</feature>
<feature type="transmembrane region" description="Helical" evidence="1">
    <location>
        <begin position="369"/>
        <end position="389"/>
    </location>
</feature>
<feature type="transmembrane region" description="Helical" evidence="1">
    <location>
        <begin position="439"/>
        <end position="459"/>
    </location>
</feature>
<feature type="transmembrane region" description="Helical" evidence="1">
    <location>
        <begin position="470"/>
        <end position="490"/>
    </location>
</feature>
<feature type="transmembrane region" description="Helical" evidence="1">
    <location>
        <begin position="517"/>
        <end position="537"/>
    </location>
</feature>
<feature type="region of interest" description="Disordered" evidence="2">
    <location>
        <begin position="42"/>
        <end position="74"/>
    </location>
</feature>
<gene>
    <name evidence="1" type="primary">yidC</name>
    <name type="ordered locus">PSPTO_5612</name>
</gene>
<dbReference type="EMBL" id="AE016853">
    <property type="protein sequence ID" value="AAO59025.1"/>
    <property type="molecule type" value="Genomic_DNA"/>
</dbReference>
<dbReference type="RefSeq" id="NP_795330.1">
    <property type="nucleotide sequence ID" value="NC_004578.1"/>
</dbReference>
<dbReference type="RefSeq" id="WP_011105595.1">
    <property type="nucleotide sequence ID" value="NC_004578.1"/>
</dbReference>
<dbReference type="SMR" id="Q87TS1"/>
<dbReference type="STRING" id="223283.PSPTO_5612"/>
<dbReference type="GeneID" id="1187304"/>
<dbReference type="KEGG" id="pst:PSPTO_5612"/>
<dbReference type="PATRIC" id="fig|223283.9.peg.5749"/>
<dbReference type="eggNOG" id="COG0706">
    <property type="taxonomic scope" value="Bacteria"/>
</dbReference>
<dbReference type="HOGENOM" id="CLU_016535_3_0_6"/>
<dbReference type="OrthoDB" id="9780552at2"/>
<dbReference type="PhylomeDB" id="Q87TS1"/>
<dbReference type="Proteomes" id="UP000002515">
    <property type="component" value="Chromosome"/>
</dbReference>
<dbReference type="GO" id="GO:0005886">
    <property type="term" value="C:plasma membrane"/>
    <property type="evidence" value="ECO:0007669"/>
    <property type="project" value="UniProtKB-SubCell"/>
</dbReference>
<dbReference type="GO" id="GO:0032977">
    <property type="term" value="F:membrane insertase activity"/>
    <property type="evidence" value="ECO:0007669"/>
    <property type="project" value="InterPro"/>
</dbReference>
<dbReference type="GO" id="GO:0051205">
    <property type="term" value="P:protein insertion into membrane"/>
    <property type="evidence" value="ECO:0007669"/>
    <property type="project" value="TreeGrafter"/>
</dbReference>
<dbReference type="GO" id="GO:0015031">
    <property type="term" value="P:protein transport"/>
    <property type="evidence" value="ECO:0007669"/>
    <property type="project" value="UniProtKB-KW"/>
</dbReference>
<dbReference type="CDD" id="cd20070">
    <property type="entry name" value="5TM_YidC_Alb3"/>
    <property type="match status" value="1"/>
</dbReference>
<dbReference type="CDD" id="cd19961">
    <property type="entry name" value="EcYidC-like_peri"/>
    <property type="match status" value="1"/>
</dbReference>
<dbReference type="Gene3D" id="2.70.98.90">
    <property type="match status" value="1"/>
</dbReference>
<dbReference type="HAMAP" id="MF_01810">
    <property type="entry name" value="YidC_type1"/>
    <property type="match status" value="1"/>
</dbReference>
<dbReference type="InterPro" id="IPR019998">
    <property type="entry name" value="Membr_insert_YidC"/>
</dbReference>
<dbReference type="InterPro" id="IPR028053">
    <property type="entry name" value="Membr_insert_YidC_N"/>
</dbReference>
<dbReference type="InterPro" id="IPR001708">
    <property type="entry name" value="YidC/ALB3/OXA1/COX18"/>
</dbReference>
<dbReference type="InterPro" id="IPR028055">
    <property type="entry name" value="YidC/Oxa/ALB_C"/>
</dbReference>
<dbReference type="InterPro" id="IPR047196">
    <property type="entry name" value="YidC_ALB_C"/>
</dbReference>
<dbReference type="InterPro" id="IPR038221">
    <property type="entry name" value="YidC_periplasmic_sf"/>
</dbReference>
<dbReference type="NCBIfam" id="NF002352">
    <property type="entry name" value="PRK01318.1-3"/>
    <property type="match status" value="1"/>
</dbReference>
<dbReference type="NCBIfam" id="NF002353">
    <property type="entry name" value="PRK01318.1-4"/>
    <property type="match status" value="1"/>
</dbReference>
<dbReference type="NCBIfam" id="TIGR03593">
    <property type="entry name" value="yidC_nterm"/>
    <property type="match status" value="1"/>
</dbReference>
<dbReference type="NCBIfam" id="TIGR03592">
    <property type="entry name" value="yidC_oxa1_cterm"/>
    <property type="match status" value="1"/>
</dbReference>
<dbReference type="PANTHER" id="PTHR12428:SF65">
    <property type="entry name" value="CYTOCHROME C OXIDASE ASSEMBLY PROTEIN COX18, MITOCHONDRIAL"/>
    <property type="match status" value="1"/>
</dbReference>
<dbReference type="PANTHER" id="PTHR12428">
    <property type="entry name" value="OXA1"/>
    <property type="match status" value="1"/>
</dbReference>
<dbReference type="Pfam" id="PF02096">
    <property type="entry name" value="60KD_IMP"/>
    <property type="match status" value="1"/>
</dbReference>
<dbReference type="Pfam" id="PF14849">
    <property type="entry name" value="YidC_periplas"/>
    <property type="match status" value="1"/>
</dbReference>
<dbReference type="PRINTS" id="PR00701">
    <property type="entry name" value="60KDINNERMP"/>
</dbReference>
<dbReference type="PRINTS" id="PR01900">
    <property type="entry name" value="YIDCPROTEIN"/>
</dbReference>
<proteinExistence type="inferred from homology"/>
<keyword id="KW-0997">Cell inner membrane</keyword>
<keyword id="KW-1003">Cell membrane</keyword>
<keyword id="KW-0143">Chaperone</keyword>
<keyword id="KW-0472">Membrane</keyword>
<keyword id="KW-0653">Protein transport</keyword>
<keyword id="KW-1185">Reference proteome</keyword>
<keyword id="KW-0812">Transmembrane</keyword>
<keyword id="KW-1133">Transmembrane helix</keyword>
<keyword id="KW-0813">Transport</keyword>
<accession>Q87TS1</accession>